<keyword id="KW-0998">Cell outer membrane</keyword>
<keyword id="KW-0472">Membrane</keyword>
<keyword id="KW-1185">Reference proteome</keyword>
<keyword id="KW-0732">Signal</keyword>
<keyword id="KW-0812">Transmembrane</keyword>
<keyword id="KW-1134">Transmembrane beta strand</keyword>
<keyword id="KW-0843">Virulence</keyword>
<protein>
    <recommendedName>
        <fullName>Virulence membrane protein PagC</fullName>
    </recommendedName>
</protein>
<proteinExistence type="inferred from homology"/>
<evidence type="ECO:0000255" key="1"/>
<evidence type="ECO:0000305" key="2"/>
<reference key="1">
    <citation type="journal article" date="1991" name="J. Bacteriol.">
        <title>A Salmonella typhimurium virulence protein is similar to a Yersinia enterocolitica invasion protein and a bacteriophage lambda outer membrane protein.</title>
        <authorList>
            <person name="Pulkkinen W.S."/>
            <person name="Miller S.I."/>
        </authorList>
    </citation>
    <scope>NUCLEOTIDE SEQUENCE [GENOMIC DNA]</scope>
    <source>
        <strain>ATCC 14028 / SGSG 2980 / CDC 6516-60 / NCTC 12023</strain>
    </source>
</reference>
<reference key="2">
    <citation type="journal article" date="2001" name="Nature">
        <title>Complete genome sequence of Salmonella enterica serovar Typhimurium LT2.</title>
        <authorList>
            <person name="McClelland M."/>
            <person name="Sanderson K.E."/>
            <person name="Spieth J."/>
            <person name="Clifton S.W."/>
            <person name="Latreille P."/>
            <person name="Courtney L."/>
            <person name="Porwollik S."/>
            <person name="Ali J."/>
            <person name="Dante M."/>
            <person name="Du F."/>
            <person name="Hou S."/>
            <person name="Layman D."/>
            <person name="Leonard S."/>
            <person name="Nguyen C."/>
            <person name="Scott K."/>
            <person name="Holmes A."/>
            <person name="Grewal N."/>
            <person name="Mulvaney E."/>
            <person name="Ryan E."/>
            <person name="Sun H."/>
            <person name="Florea L."/>
            <person name="Miller W."/>
            <person name="Stoneking T."/>
            <person name="Nhan M."/>
            <person name="Waterston R."/>
            <person name="Wilson R.K."/>
        </authorList>
    </citation>
    <scope>NUCLEOTIDE SEQUENCE [LARGE SCALE GENOMIC DNA]</scope>
    <source>
        <strain>LT2 / SGSC1412 / ATCC 700720</strain>
    </source>
</reference>
<organism>
    <name type="scientific">Salmonella typhimurium (strain LT2 / SGSC1412 / ATCC 700720)</name>
    <dbReference type="NCBI Taxonomy" id="99287"/>
    <lineage>
        <taxon>Bacteria</taxon>
        <taxon>Pseudomonadati</taxon>
        <taxon>Pseudomonadota</taxon>
        <taxon>Gammaproteobacteria</taxon>
        <taxon>Enterobacterales</taxon>
        <taxon>Enterobacteriaceae</taxon>
        <taxon>Salmonella</taxon>
    </lineage>
</organism>
<comment type="function">
    <text>Essential for full virulence and survival within macrophages.</text>
</comment>
<comment type="subcellular location">
    <subcellularLocation>
        <location>Cell outer membrane</location>
        <topology>Multi-pass membrane protein</topology>
    </subcellularLocation>
</comment>
<comment type="similarity">
    <text evidence="2">Belongs to the outer membrane OOP (TC 1.B.6) superfamily. Ail family.</text>
</comment>
<sequence length="185" mass="20184">MKNIILSTLVITTSVLVVNVAQADTNAFSVGYAQSKVQDFKNIRGVNVKYRYEDDSPVSFISSLSYLYGDRQASGSVEPEGIHYHDKFEVKYGSLMVGPAYRLSDNFSLYALAGVGTVKATFKEHSTQDGDSFSNKISSRKTGFAWGAGVQMNPLENIVVDVGYEGSNISSTKINGFNVGVGYRF</sequence>
<dbReference type="EMBL" id="M55546">
    <property type="protein sequence ID" value="AAA27179.1"/>
    <property type="molecule type" value="Genomic_DNA"/>
</dbReference>
<dbReference type="EMBL" id="AE006468">
    <property type="protein sequence ID" value="AAL20174.1"/>
    <property type="molecule type" value="Genomic_DNA"/>
</dbReference>
<dbReference type="PIR" id="A39185">
    <property type="entry name" value="A39185"/>
</dbReference>
<dbReference type="RefSeq" id="NP_460215.1">
    <property type="nucleotide sequence ID" value="NC_003197.2"/>
</dbReference>
<dbReference type="RefSeq" id="WP_000789471.1">
    <property type="nucleotide sequence ID" value="NC_003197.2"/>
</dbReference>
<dbReference type="SMR" id="P23988"/>
<dbReference type="STRING" id="99287.STM1246"/>
<dbReference type="PaxDb" id="99287-STM1246"/>
<dbReference type="GeneID" id="1252764"/>
<dbReference type="KEGG" id="stm:STM1246"/>
<dbReference type="PATRIC" id="fig|99287.12.peg.1318"/>
<dbReference type="HOGENOM" id="CLU_099385_1_0_6"/>
<dbReference type="OMA" id="NIRGVNA"/>
<dbReference type="PhylomeDB" id="P23988"/>
<dbReference type="BioCyc" id="SENT99287:STM1246-MONOMER"/>
<dbReference type="Proteomes" id="UP000001014">
    <property type="component" value="Chromosome"/>
</dbReference>
<dbReference type="GO" id="GO:0009279">
    <property type="term" value="C:cell outer membrane"/>
    <property type="evidence" value="ECO:0000318"/>
    <property type="project" value="GO_Central"/>
</dbReference>
<dbReference type="GO" id="GO:0044384">
    <property type="term" value="C:host outer membrane"/>
    <property type="evidence" value="ECO:0007669"/>
    <property type="project" value="InterPro"/>
</dbReference>
<dbReference type="Gene3D" id="2.40.160.20">
    <property type="match status" value="1"/>
</dbReference>
<dbReference type="InterPro" id="IPR051723">
    <property type="entry name" value="Bact_OM_Invasion-Related"/>
</dbReference>
<dbReference type="InterPro" id="IPR000758">
    <property type="entry name" value="Enterovir_OMP"/>
</dbReference>
<dbReference type="InterPro" id="IPR011250">
    <property type="entry name" value="OMP/PagP_b-brl"/>
</dbReference>
<dbReference type="PANTHER" id="PTHR35892:SF2">
    <property type="entry name" value="OUTER MEMBRANE PROTEIN PAGN"/>
    <property type="match status" value="1"/>
</dbReference>
<dbReference type="PANTHER" id="PTHR35892">
    <property type="entry name" value="OUTER MEMBRANE PROTEIN PAGN-RELATED"/>
    <property type="match status" value="1"/>
</dbReference>
<dbReference type="Pfam" id="PF06316">
    <property type="entry name" value="Ail_Lom"/>
    <property type="match status" value="1"/>
</dbReference>
<dbReference type="PRINTS" id="PR00316">
    <property type="entry name" value="ENTEROVIROMP"/>
</dbReference>
<dbReference type="SUPFAM" id="SSF56925">
    <property type="entry name" value="OMPA-like"/>
    <property type="match status" value="1"/>
</dbReference>
<dbReference type="PROSITE" id="PS00694">
    <property type="entry name" value="ENT_VIR_OMP_1"/>
    <property type="match status" value="1"/>
</dbReference>
<dbReference type="PROSITE" id="PS00695">
    <property type="entry name" value="ENT_VIR_OMP_2"/>
    <property type="match status" value="1"/>
</dbReference>
<name>PAGC_SALTY</name>
<gene>
    <name type="primary">pagC</name>
    <name type="ordered locus">STM1246</name>
</gene>
<accession>P23988</accession>
<feature type="signal peptide" evidence="1">
    <location>
        <begin position="1"/>
        <end position="23"/>
    </location>
</feature>
<feature type="chain" id="PRO_0000020204" description="Virulence membrane protein PagC">
    <location>
        <begin position="24"/>
        <end position="185"/>
    </location>
</feature>
<feature type="sequence conflict" description="In Ref. 1; AAA27179." evidence="2" ref="1">
    <original>A</original>
    <variation>ARYA</variation>
    <location>
        <position position="33"/>
    </location>
</feature>